<dbReference type="EMBL" id="CP000923">
    <property type="protein sequence ID" value="ABY92194.1"/>
    <property type="molecule type" value="Genomic_DNA"/>
</dbReference>
<dbReference type="RefSeq" id="WP_003868584.1">
    <property type="nucleotide sequence ID" value="NC_010320.1"/>
</dbReference>
<dbReference type="SMR" id="B0K5R8"/>
<dbReference type="KEGG" id="tex:Teth514_0892"/>
<dbReference type="HOGENOM" id="CLU_103849_1_2_9"/>
<dbReference type="Proteomes" id="UP000002155">
    <property type="component" value="Chromosome"/>
</dbReference>
<dbReference type="GO" id="GO:0005829">
    <property type="term" value="C:cytosol"/>
    <property type="evidence" value="ECO:0007669"/>
    <property type="project" value="TreeGrafter"/>
</dbReference>
<dbReference type="GO" id="GO:0015935">
    <property type="term" value="C:small ribosomal subunit"/>
    <property type="evidence" value="ECO:0007669"/>
    <property type="project" value="TreeGrafter"/>
</dbReference>
<dbReference type="GO" id="GO:0019843">
    <property type="term" value="F:rRNA binding"/>
    <property type="evidence" value="ECO:0007669"/>
    <property type="project" value="UniProtKB-UniRule"/>
</dbReference>
<dbReference type="GO" id="GO:0003735">
    <property type="term" value="F:structural constituent of ribosome"/>
    <property type="evidence" value="ECO:0007669"/>
    <property type="project" value="InterPro"/>
</dbReference>
<dbReference type="GO" id="GO:0000049">
    <property type="term" value="F:tRNA binding"/>
    <property type="evidence" value="ECO:0007669"/>
    <property type="project" value="UniProtKB-UniRule"/>
</dbReference>
<dbReference type="GO" id="GO:0006412">
    <property type="term" value="P:translation"/>
    <property type="evidence" value="ECO:0007669"/>
    <property type="project" value="UniProtKB-UniRule"/>
</dbReference>
<dbReference type="FunFam" id="1.10.8.50:FF:000001">
    <property type="entry name" value="30S ribosomal protein S13"/>
    <property type="match status" value="1"/>
</dbReference>
<dbReference type="FunFam" id="4.10.910.10:FF:000001">
    <property type="entry name" value="30S ribosomal protein S13"/>
    <property type="match status" value="1"/>
</dbReference>
<dbReference type="Gene3D" id="1.10.8.50">
    <property type="match status" value="1"/>
</dbReference>
<dbReference type="Gene3D" id="4.10.910.10">
    <property type="entry name" value="30s ribosomal protein s13, domain 2"/>
    <property type="match status" value="1"/>
</dbReference>
<dbReference type="HAMAP" id="MF_01315">
    <property type="entry name" value="Ribosomal_uS13"/>
    <property type="match status" value="1"/>
</dbReference>
<dbReference type="InterPro" id="IPR027437">
    <property type="entry name" value="Rbsml_uS13_C"/>
</dbReference>
<dbReference type="InterPro" id="IPR001892">
    <property type="entry name" value="Ribosomal_uS13"/>
</dbReference>
<dbReference type="InterPro" id="IPR010979">
    <property type="entry name" value="Ribosomal_uS13-like_H2TH"/>
</dbReference>
<dbReference type="InterPro" id="IPR019980">
    <property type="entry name" value="Ribosomal_uS13_bac-type"/>
</dbReference>
<dbReference type="InterPro" id="IPR018269">
    <property type="entry name" value="Ribosomal_uS13_CS"/>
</dbReference>
<dbReference type="NCBIfam" id="TIGR03631">
    <property type="entry name" value="uS13_bact"/>
    <property type="match status" value="1"/>
</dbReference>
<dbReference type="PANTHER" id="PTHR10871">
    <property type="entry name" value="30S RIBOSOMAL PROTEIN S13/40S RIBOSOMAL PROTEIN S18"/>
    <property type="match status" value="1"/>
</dbReference>
<dbReference type="PANTHER" id="PTHR10871:SF1">
    <property type="entry name" value="SMALL RIBOSOMAL SUBUNIT PROTEIN US13M"/>
    <property type="match status" value="1"/>
</dbReference>
<dbReference type="Pfam" id="PF00416">
    <property type="entry name" value="Ribosomal_S13"/>
    <property type="match status" value="1"/>
</dbReference>
<dbReference type="PIRSF" id="PIRSF002134">
    <property type="entry name" value="Ribosomal_S13"/>
    <property type="match status" value="1"/>
</dbReference>
<dbReference type="SUPFAM" id="SSF46946">
    <property type="entry name" value="S13-like H2TH domain"/>
    <property type="match status" value="1"/>
</dbReference>
<dbReference type="PROSITE" id="PS00646">
    <property type="entry name" value="RIBOSOMAL_S13_1"/>
    <property type="match status" value="1"/>
</dbReference>
<dbReference type="PROSITE" id="PS50159">
    <property type="entry name" value="RIBOSOMAL_S13_2"/>
    <property type="match status" value="1"/>
</dbReference>
<comment type="function">
    <text evidence="1">Located at the top of the head of the 30S subunit, it contacts several helices of the 16S rRNA. In the 70S ribosome it contacts the 23S rRNA (bridge B1a) and protein L5 of the 50S subunit (bridge B1b), connecting the 2 subunits; these bridges are implicated in subunit movement. Contacts the tRNAs in the A and P-sites.</text>
</comment>
<comment type="subunit">
    <text evidence="1">Part of the 30S ribosomal subunit. Forms a loose heterodimer with protein S19. Forms two bridges to the 50S subunit in the 70S ribosome.</text>
</comment>
<comment type="similarity">
    <text evidence="1">Belongs to the universal ribosomal protein uS13 family.</text>
</comment>
<reference key="1">
    <citation type="submission" date="2008-01" db="EMBL/GenBank/DDBJ databases">
        <title>Complete sequence of Thermoanaerobacter sp. X514.</title>
        <authorList>
            <consortium name="US DOE Joint Genome Institute"/>
            <person name="Copeland A."/>
            <person name="Lucas S."/>
            <person name="Lapidus A."/>
            <person name="Barry K."/>
            <person name="Glavina del Rio T."/>
            <person name="Dalin E."/>
            <person name="Tice H."/>
            <person name="Pitluck S."/>
            <person name="Bruce D."/>
            <person name="Goodwin L."/>
            <person name="Saunders E."/>
            <person name="Brettin T."/>
            <person name="Detter J.C."/>
            <person name="Han C."/>
            <person name="Schmutz J."/>
            <person name="Larimer F."/>
            <person name="Land M."/>
            <person name="Hauser L."/>
            <person name="Kyrpides N."/>
            <person name="Kim E."/>
            <person name="Hemme C."/>
            <person name="Fields M.W."/>
            <person name="He Z."/>
            <person name="Zhou J."/>
            <person name="Richardson P."/>
        </authorList>
    </citation>
    <scope>NUCLEOTIDE SEQUENCE [LARGE SCALE GENOMIC DNA]</scope>
    <source>
        <strain>X514</strain>
    </source>
</reference>
<feature type="chain" id="PRO_1000141322" description="Small ribosomal subunit protein uS13">
    <location>
        <begin position="1"/>
        <end position="122"/>
    </location>
</feature>
<feature type="region of interest" description="Disordered" evidence="2">
    <location>
        <begin position="95"/>
        <end position="122"/>
    </location>
</feature>
<evidence type="ECO:0000255" key="1">
    <source>
        <dbReference type="HAMAP-Rule" id="MF_01315"/>
    </source>
</evidence>
<evidence type="ECO:0000256" key="2">
    <source>
        <dbReference type="SAM" id="MobiDB-lite"/>
    </source>
</evidence>
<evidence type="ECO:0000305" key="3"/>
<organism>
    <name type="scientific">Thermoanaerobacter sp. (strain X514)</name>
    <dbReference type="NCBI Taxonomy" id="399726"/>
    <lineage>
        <taxon>Bacteria</taxon>
        <taxon>Bacillati</taxon>
        <taxon>Bacillota</taxon>
        <taxon>Clostridia</taxon>
        <taxon>Thermoanaerobacterales</taxon>
        <taxon>Thermoanaerobacteraceae</taxon>
        <taxon>Thermoanaerobacter</taxon>
    </lineage>
</organism>
<protein>
    <recommendedName>
        <fullName evidence="1">Small ribosomal subunit protein uS13</fullName>
    </recommendedName>
    <alternativeName>
        <fullName evidence="3">30S ribosomal protein S13</fullName>
    </alternativeName>
</protein>
<keyword id="KW-0687">Ribonucleoprotein</keyword>
<keyword id="KW-0689">Ribosomal protein</keyword>
<keyword id="KW-0694">RNA-binding</keyword>
<keyword id="KW-0699">rRNA-binding</keyword>
<keyword id="KW-0820">tRNA-binding</keyword>
<name>RS13_THEPX</name>
<gene>
    <name evidence="1" type="primary">rpsM</name>
    <name type="ordered locus">Teth514_0892</name>
</gene>
<proteinExistence type="inferred from homology"/>
<accession>B0K5R8</accession>
<sequence length="122" mass="14044">MARIAGVDLPRDKRVEIALTYIYGIGRSRSNEILAKAGVNPDTRVKDLTEEEVSRLREIIDKEYKVEGDLRKEVAMNIKRLMDIGCYRGIRHKRGLPVRGQRTRTNARTRKGPRKTVAKKKK</sequence>